<comment type="function">
    <text evidence="1">May mediate protein transfer from the SecYEG translocon to the periplasmic chaperone network via its periplasmic C-terminal region.</text>
</comment>
<comment type="subunit">
    <text evidence="1">Interacts with the SecYEG translocon (By similarity). Forms a complex with PpiD (By similarity).</text>
</comment>
<comment type="subcellular location">
    <subcellularLocation>
        <location evidence="1">Cell inner membrane</location>
        <topology evidence="1">Single-pass type II membrane protein</topology>
        <orientation evidence="1">Periplasmic side</orientation>
    </subcellularLocation>
</comment>
<comment type="similarity">
    <text evidence="3">Belongs to the YfgM family.</text>
</comment>
<name>YFGM_BUCAP</name>
<dbReference type="EMBL" id="AF008210">
    <property type="protein sequence ID" value="AAC38118.1"/>
    <property type="molecule type" value="Genomic_DNA"/>
</dbReference>
<dbReference type="EMBL" id="AE013218">
    <property type="protein sequence ID" value="AAM68117.1"/>
    <property type="molecule type" value="Genomic_DNA"/>
</dbReference>
<dbReference type="SMR" id="O51880"/>
<dbReference type="STRING" id="198804.BUsg_583"/>
<dbReference type="KEGG" id="bas:BUsg_583"/>
<dbReference type="eggNOG" id="COG2976">
    <property type="taxonomic scope" value="Bacteria"/>
</dbReference>
<dbReference type="HOGENOM" id="CLU_084785_0_1_6"/>
<dbReference type="Proteomes" id="UP000000416">
    <property type="component" value="Chromosome"/>
</dbReference>
<dbReference type="GO" id="GO:0005886">
    <property type="term" value="C:plasma membrane"/>
    <property type="evidence" value="ECO:0007669"/>
    <property type="project" value="UniProtKB-SubCell"/>
</dbReference>
<dbReference type="GO" id="GO:0044877">
    <property type="term" value="F:protein-containing complex binding"/>
    <property type="evidence" value="ECO:0007669"/>
    <property type="project" value="InterPro"/>
</dbReference>
<dbReference type="InterPro" id="IPR018704">
    <property type="entry name" value="SecYEG/CpoB_TPR"/>
</dbReference>
<dbReference type="InterPro" id="IPR011990">
    <property type="entry name" value="TPR-like_helical_dom_sf"/>
</dbReference>
<dbReference type="InterPro" id="IPR026039">
    <property type="entry name" value="YfgM"/>
</dbReference>
<dbReference type="PANTHER" id="PTHR38035:SF1">
    <property type="entry name" value="ANCILLARY SECYEG TRANSLOCON SUBUNIT"/>
    <property type="match status" value="1"/>
</dbReference>
<dbReference type="PANTHER" id="PTHR38035">
    <property type="entry name" value="UPF0070 PROTEIN YFGM"/>
    <property type="match status" value="1"/>
</dbReference>
<dbReference type="Pfam" id="PF09976">
    <property type="entry name" value="TPR_21"/>
    <property type="match status" value="1"/>
</dbReference>
<dbReference type="SUPFAM" id="SSF48452">
    <property type="entry name" value="TPR-like"/>
    <property type="match status" value="1"/>
</dbReference>
<gene>
    <name type="ordered locus">BUsg_583</name>
</gene>
<reference key="1">
    <citation type="journal article" date="1998" name="Curr. Microbiol.">
        <title>Sequence analysis of a 34.7-kb DNA segment from the genome of Buchnera aphidicola (endosymbiont of aphids) containing groEL, dnaA, the atp operon, gidA, and rho.</title>
        <authorList>
            <person name="Clark M.A."/>
            <person name="Baumann L."/>
            <person name="Baumann P."/>
        </authorList>
    </citation>
    <scope>NUCLEOTIDE SEQUENCE [GENOMIC DNA]</scope>
</reference>
<reference key="2">
    <citation type="journal article" date="2002" name="Science">
        <title>50 million years of genomic stasis in endosymbiotic bacteria.</title>
        <authorList>
            <person name="Tamas I."/>
            <person name="Klasson L."/>
            <person name="Canbaeck B."/>
            <person name="Naeslund A.K."/>
            <person name="Eriksson A.-S."/>
            <person name="Wernegreen J.J."/>
            <person name="Sandstroem J.P."/>
            <person name="Moran N.A."/>
            <person name="Andersson S.G.E."/>
        </authorList>
    </citation>
    <scope>NUCLEOTIDE SEQUENCE [LARGE SCALE GENOMIC DNA]</scope>
    <source>
        <strain>Sg</strain>
    </source>
</reference>
<sequence length="194" mass="23180">MHLNKMKKVSLKTYLVLFFLIFFIFCSFWFIKPKEKKLKLEKLRYEEVIKKINAKNNQNLKSVENFITENKNIYGTLSSLFLAKKYILDKNLDKALIQLNNSLKYTKEENLQNILKIRIAKIKIQQNKNQDAIKILEEIKDNSWKNIVENMKGDIFMKNKEIKKAILAWKKSKYLEKSNASKEIINMKINEIKR</sequence>
<accession>O51880</accession>
<organism>
    <name type="scientific">Buchnera aphidicola subsp. Schizaphis graminum (strain Sg)</name>
    <dbReference type="NCBI Taxonomy" id="198804"/>
    <lineage>
        <taxon>Bacteria</taxon>
        <taxon>Pseudomonadati</taxon>
        <taxon>Pseudomonadota</taxon>
        <taxon>Gammaproteobacteria</taxon>
        <taxon>Enterobacterales</taxon>
        <taxon>Erwiniaceae</taxon>
        <taxon>Buchnera</taxon>
    </lineage>
</organism>
<proteinExistence type="inferred from homology"/>
<evidence type="ECO:0000250" key="1">
    <source>
        <dbReference type="UniProtKB" id="P76576"/>
    </source>
</evidence>
<evidence type="ECO:0000255" key="2"/>
<evidence type="ECO:0000305" key="3"/>
<keyword id="KW-0997">Cell inner membrane</keyword>
<keyword id="KW-1003">Cell membrane</keyword>
<keyword id="KW-0143">Chaperone</keyword>
<keyword id="KW-0472">Membrane</keyword>
<keyword id="KW-0812">Transmembrane</keyword>
<keyword id="KW-1133">Transmembrane helix</keyword>
<feature type="chain" id="PRO_0000214362" description="Ancillary SecYEG translocon subunit">
    <location>
        <begin position="1"/>
        <end position="194"/>
    </location>
</feature>
<feature type="topological domain" description="Cytoplasmic" evidence="1">
    <location>
        <begin position="1"/>
        <end position="10"/>
    </location>
</feature>
<feature type="transmembrane region" description="Helical" evidence="2">
    <location>
        <begin position="11"/>
        <end position="31"/>
    </location>
</feature>
<feature type="topological domain" description="Periplasmic" evidence="1">
    <location>
        <begin position="32"/>
        <end position="194"/>
    </location>
</feature>
<protein>
    <recommendedName>
        <fullName evidence="1">Ancillary SecYEG translocon subunit</fullName>
    </recommendedName>
    <alternativeName>
        <fullName evidence="1">Periplasmic chaperone YfgM</fullName>
    </alternativeName>
</protein>